<feature type="chain" id="PRO_0000108919" description="Phospho-N-acetylmuramoyl-pentapeptide-transferase">
    <location>
        <begin position="1"/>
        <end position="363"/>
    </location>
</feature>
<feature type="transmembrane region" description="Helical" evidence="1">
    <location>
        <begin position="33"/>
        <end position="53"/>
    </location>
</feature>
<feature type="transmembrane region" description="Helical" evidence="1">
    <location>
        <begin position="82"/>
        <end position="102"/>
    </location>
</feature>
<feature type="transmembrane region" description="Helical" evidence="1">
    <location>
        <begin position="105"/>
        <end position="125"/>
    </location>
</feature>
<feature type="transmembrane region" description="Helical" evidence="1">
    <location>
        <begin position="133"/>
        <end position="153"/>
    </location>
</feature>
<feature type="transmembrane region" description="Helical" evidence="1">
    <location>
        <begin position="166"/>
        <end position="186"/>
    </location>
</feature>
<feature type="transmembrane region" description="Helical" evidence="1">
    <location>
        <begin position="198"/>
        <end position="218"/>
    </location>
</feature>
<feature type="transmembrane region" description="Helical" evidence="1">
    <location>
        <begin position="227"/>
        <end position="247"/>
    </location>
</feature>
<feature type="transmembrane region" description="Helical" evidence="1">
    <location>
        <begin position="271"/>
        <end position="291"/>
    </location>
</feature>
<feature type="transmembrane region" description="Helical" evidence="1">
    <location>
        <begin position="295"/>
        <end position="315"/>
    </location>
</feature>
<feature type="transmembrane region" description="Helical" evidence="1">
    <location>
        <begin position="340"/>
        <end position="360"/>
    </location>
</feature>
<name>MRAY_TREPA</name>
<comment type="function">
    <text evidence="1">Catalyzes the initial step of the lipid cycle reactions in the biosynthesis of the cell wall peptidoglycan: transfers peptidoglycan precursor phospho-MurNAc-pentapeptide from UDP-MurNAc-pentapeptide onto the lipid carrier undecaprenyl phosphate, yielding undecaprenyl-pyrophosphoryl-MurNAc-pentapeptide, known as lipid I.</text>
</comment>
<comment type="catalytic activity">
    <reaction evidence="1">
        <text>UDP-N-acetyl-alpha-D-muramoyl-L-alanyl-gamma-D-glutamyl-meso-2,6-diaminopimeloyl-D-alanyl-D-alanine + di-trans,octa-cis-undecaprenyl phosphate = di-trans,octa-cis-undecaprenyl diphospho-N-acetyl-alpha-D-muramoyl-L-alanyl-D-glutamyl-meso-2,6-diaminopimeloyl-D-alanyl-D-alanine + UMP</text>
        <dbReference type="Rhea" id="RHEA:28386"/>
        <dbReference type="ChEBI" id="CHEBI:57865"/>
        <dbReference type="ChEBI" id="CHEBI:60392"/>
        <dbReference type="ChEBI" id="CHEBI:61386"/>
        <dbReference type="ChEBI" id="CHEBI:61387"/>
        <dbReference type="EC" id="2.7.8.13"/>
    </reaction>
</comment>
<comment type="cofactor">
    <cofactor evidence="1">
        <name>Mg(2+)</name>
        <dbReference type="ChEBI" id="CHEBI:18420"/>
    </cofactor>
</comment>
<comment type="pathway">
    <text evidence="1">Cell wall biogenesis; peptidoglycan biosynthesis.</text>
</comment>
<comment type="subcellular location">
    <subcellularLocation>
        <location evidence="1">Cell inner membrane</location>
        <topology evidence="1">Multi-pass membrane protein</topology>
    </subcellularLocation>
</comment>
<comment type="similarity">
    <text evidence="1">Belongs to the glycosyltransferase 4 family. MraY subfamily.</text>
</comment>
<reference key="1">
    <citation type="journal article" date="1998" name="Science">
        <title>Complete genome sequence of Treponema pallidum, the syphilis spirochete.</title>
        <authorList>
            <person name="Fraser C.M."/>
            <person name="Norris S.J."/>
            <person name="Weinstock G.M."/>
            <person name="White O."/>
            <person name="Sutton G.G."/>
            <person name="Dodson R.J."/>
            <person name="Gwinn M.L."/>
            <person name="Hickey E.K."/>
            <person name="Clayton R.A."/>
            <person name="Ketchum K.A."/>
            <person name="Sodergren E."/>
            <person name="Hardham J.M."/>
            <person name="McLeod M.P."/>
            <person name="Salzberg S.L."/>
            <person name="Peterson J.D."/>
            <person name="Khalak H.G."/>
            <person name="Richardson D.L."/>
            <person name="Howell J.K."/>
            <person name="Chidambaram M."/>
            <person name="Utterback T.R."/>
            <person name="McDonald L.A."/>
            <person name="Artiach P."/>
            <person name="Bowman C."/>
            <person name="Cotton M.D."/>
            <person name="Fujii C."/>
            <person name="Garland S.A."/>
            <person name="Hatch B."/>
            <person name="Horst K."/>
            <person name="Roberts K.M."/>
            <person name="Sandusky M."/>
            <person name="Weidman J.F."/>
            <person name="Smith H.O."/>
            <person name="Venter J.C."/>
        </authorList>
    </citation>
    <scope>NUCLEOTIDE SEQUENCE [LARGE SCALE GENOMIC DNA]</scope>
    <source>
        <strain>Nichols</strain>
    </source>
</reference>
<evidence type="ECO:0000255" key="1">
    <source>
        <dbReference type="HAMAP-Rule" id="MF_00038"/>
    </source>
</evidence>
<protein>
    <recommendedName>
        <fullName evidence="1">Phospho-N-acetylmuramoyl-pentapeptide-transferase</fullName>
        <ecNumber evidence="1">2.7.8.13</ecNumber>
    </recommendedName>
    <alternativeName>
        <fullName evidence="1">UDP-MurNAc-pentapeptide phosphotransferase</fullName>
    </alternativeName>
</protein>
<accession>O83365</accession>
<proteinExistence type="inferred from homology"/>
<dbReference type="EC" id="2.7.8.13" evidence="1"/>
<dbReference type="EMBL" id="AE000520">
    <property type="protein sequence ID" value="AAC65333.1"/>
    <property type="molecule type" value="Genomic_DNA"/>
</dbReference>
<dbReference type="PIR" id="H71335">
    <property type="entry name" value="H71335"/>
</dbReference>
<dbReference type="RefSeq" id="WP_010881793.1">
    <property type="nucleotide sequence ID" value="NC_021490.2"/>
</dbReference>
<dbReference type="SMR" id="O83365"/>
<dbReference type="IntAct" id="O83365">
    <property type="interactions" value="4"/>
</dbReference>
<dbReference type="STRING" id="243276.TP_0345"/>
<dbReference type="EnsemblBacteria" id="AAC65333">
    <property type="protein sequence ID" value="AAC65333"/>
    <property type="gene ID" value="TP_0345"/>
</dbReference>
<dbReference type="KEGG" id="tpa:TP_0345"/>
<dbReference type="KEGG" id="tpw:TPANIC_0345"/>
<dbReference type="eggNOG" id="COG0472">
    <property type="taxonomic scope" value="Bacteria"/>
</dbReference>
<dbReference type="HOGENOM" id="CLU_857073_0_0_12"/>
<dbReference type="OrthoDB" id="9805475at2"/>
<dbReference type="UniPathway" id="UPA00219"/>
<dbReference type="Proteomes" id="UP000000811">
    <property type="component" value="Chromosome"/>
</dbReference>
<dbReference type="GO" id="GO:0005886">
    <property type="term" value="C:plasma membrane"/>
    <property type="evidence" value="ECO:0007669"/>
    <property type="project" value="UniProtKB-SubCell"/>
</dbReference>
<dbReference type="GO" id="GO:0046872">
    <property type="term" value="F:metal ion binding"/>
    <property type="evidence" value="ECO:0007669"/>
    <property type="project" value="UniProtKB-KW"/>
</dbReference>
<dbReference type="GO" id="GO:0008963">
    <property type="term" value="F:phospho-N-acetylmuramoyl-pentapeptide-transferase activity"/>
    <property type="evidence" value="ECO:0007669"/>
    <property type="project" value="UniProtKB-UniRule"/>
</dbReference>
<dbReference type="GO" id="GO:0051992">
    <property type="term" value="F:UDP-N-acetylmuramoyl-L-alanyl-D-glutamyl-meso-2,6-diaminopimelyl-D-alanyl-D-alanine:undecaprenyl-phosphate transferase activity"/>
    <property type="evidence" value="ECO:0007669"/>
    <property type="project" value="RHEA"/>
</dbReference>
<dbReference type="GO" id="GO:0051301">
    <property type="term" value="P:cell division"/>
    <property type="evidence" value="ECO:0007669"/>
    <property type="project" value="UniProtKB-KW"/>
</dbReference>
<dbReference type="GO" id="GO:0071555">
    <property type="term" value="P:cell wall organization"/>
    <property type="evidence" value="ECO:0007669"/>
    <property type="project" value="UniProtKB-KW"/>
</dbReference>
<dbReference type="GO" id="GO:0009252">
    <property type="term" value="P:peptidoglycan biosynthetic process"/>
    <property type="evidence" value="ECO:0007669"/>
    <property type="project" value="UniProtKB-UniRule"/>
</dbReference>
<dbReference type="GO" id="GO:0008360">
    <property type="term" value="P:regulation of cell shape"/>
    <property type="evidence" value="ECO:0007669"/>
    <property type="project" value="UniProtKB-KW"/>
</dbReference>
<dbReference type="CDD" id="cd06852">
    <property type="entry name" value="GT_MraY"/>
    <property type="match status" value="1"/>
</dbReference>
<dbReference type="HAMAP" id="MF_00038">
    <property type="entry name" value="MraY"/>
    <property type="match status" value="1"/>
</dbReference>
<dbReference type="InterPro" id="IPR000715">
    <property type="entry name" value="Glycosyl_transferase_4"/>
</dbReference>
<dbReference type="InterPro" id="IPR003524">
    <property type="entry name" value="PNAcMuramoyl-5peptid_Trfase"/>
</dbReference>
<dbReference type="InterPro" id="IPR018480">
    <property type="entry name" value="PNAcMuramoyl-5peptid_Trfase_CS"/>
</dbReference>
<dbReference type="PANTHER" id="PTHR22926">
    <property type="entry name" value="PHOSPHO-N-ACETYLMURAMOYL-PENTAPEPTIDE-TRANSFERASE"/>
    <property type="match status" value="1"/>
</dbReference>
<dbReference type="PANTHER" id="PTHR22926:SF5">
    <property type="entry name" value="PHOSPHO-N-ACETYLMURAMOYL-PENTAPEPTIDE-TRANSFERASE HOMOLOG"/>
    <property type="match status" value="1"/>
</dbReference>
<dbReference type="Pfam" id="PF00953">
    <property type="entry name" value="Glycos_transf_4"/>
    <property type="match status" value="1"/>
</dbReference>
<dbReference type="PROSITE" id="PS01347">
    <property type="entry name" value="MRAY_1"/>
    <property type="match status" value="1"/>
</dbReference>
<dbReference type="PROSITE" id="PS01348">
    <property type="entry name" value="MRAY_2"/>
    <property type="match status" value="1"/>
</dbReference>
<sequence>MGLIFFRYDRCYMLSVLSYLHVYFGPFRLLQSYAVLMGIALYAGFFFTYGVLPSAYRFLPQDRGRAFAPCAQEAAGKPTGAGVIFVSVFVLLVYLLMRPSFVHALILLLTWGVMLTGYLDDCAQVCWGEYRKGALDFLFAVLTAALLGHFYFHDQVFWWFPFFSDPVFVSPFLFFAGSVVILWMSINATNCTDGVDGLSGALVLMALLSMGTIFYFLLGNVRAAQYLLVPFVVDGAQWALMSFALAGALMGYVWRNAHPSTVLMGDAGSRALGFFIGVLVLISGNPFLLLMTSGVILVNGGTGLLKVVLLRFFHVRILSRVRFPLHDHMRENWHWSTAQVLLRFMILQGLLTIGLLGVLFKLR</sequence>
<keyword id="KW-0131">Cell cycle</keyword>
<keyword id="KW-0132">Cell division</keyword>
<keyword id="KW-0997">Cell inner membrane</keyword>
<keyword id="KW-1003">Cell membrane</keyword>
<keyword id="KW-0133">Cell shape</keyword>
<keyword id="KW-0961">Cell wall biogenesis/degradation</keyword>
<keyword id="KW-0460">Magnesium</keyword>
<keyword id="KW-0472">Membrane</keyword>
<keyword id="KW-0479">Metal-binding</keyword>
<keyword id="KW-0573">Peptidoglycan synthesis</keyword>
<keyword id="KW-1185">Reference proteome</keyword>
<keyword id="KW-0808">Transferase</keyword>
<keyword id="KW-0812">Transmembrane</keyword>
<keyword id="KW-1133">Transmembrane helix</keyword>
<gene>
    <name evidence="1" type="primary">mraY</name>
    <name type="ordered locus">TP_0345</name>
</gene>
<organism>
    <name type="scientific">Treponema pallidum (strain Nichols)</name>
    <dbReference type="NCBI Taxonomy" id="243276"/>
    <lineage>
        <taxon>Bacteria</taxon>
        <taxon>Pseudomonadati</taxon>
        <taxon>Spirochaetota</taxon>
        <taxon>Spirochaetia</taxon>
        <taxon>Spirochaetales</taxon>
        <taxon>Treponemataceae</taxon>
        <taxon>Treponema</taxon>
    </lineage>
</organism>